<reference key="1">
    <citation type="journal article" date="2004" name="Proc. Natl. Acad. Sci. U.S.A.">
        <title>The louse-borne human pathogen Bartonella quintana is a genomic derivative of the zoonotic agent Bartonella henselae.</title>
        <authorList>
            <person name="Alsmark U.C.M."/>
            <person name="Frank A.C."/>
            <person name="Karlberg E.O."/>
            <person name="Legault B.-A."/>
            <person name="Ardell D.H."/>
            <person name="Canbaeck B."/>
            <person name="Eriksson A.-S."/>
            <person name="Naeslund A.K."/>
            <person name="Handley S.A."/>
            <person name="Huvet M."/>
            <person name="La Scola B."/>
            <person name="Holmberg M."/>
            <person name="Andersson S.G.E."/>
        </authorList>
    </citation>
    <scope>NUCLEOTIDE SEQUENCE [LARGE SCALE GENOMIC DNA]</scope>
    <source>
        <strain>ATCC 49882 / DSM 28221 / CCUG 30454 / Houston 1</strain>
    </source>
</reference>
<keyword id="KW-0012">Acyltransferase</keyword>
<keyword id="KW-0963">Cytoplasm</keyword>
<keyword id="KW-0408">Iron</keyword>
<keyword id="KW-0479">Metal-binding</keyword>
<keyword id="KW-0808">Transferase</keyword>
<keyword id="KW-0819">tRNA processing</keyword>
<name>TSAD_BARHE</name>
<comment type="function">
    <text evidence="1">Required for the formation of a threonylcarbamoyl group on adenosine at position 37 (t(6)A37) in tRNAs that read codons beginning with adenine. Is involved in the transfer of the threonylcarbamoyl moiety of threonylcarbamoyl-AMP (TC-AMP) to the N6 group of A37, together with TsaE and TsaB. TsaD likely plays a direct catalytic role in this reaction.</text>
</comment>
<comment type="catalytic activity">
    <reaction evidence="1">
        <text>L-threonylcarbamoyladenylate + adenosine(37) in tRNA = N(6)-L-threonylcarbamoyladenosine(37) in tRNA + AMP + H(+)</text>
        <dbReference type="Rhea" id="RHEA:37059"/>
        <dbReference type="Rhea" id="RHEA-COMP:10162"/>
        <dbReference type="Rhea" id="RHEA-COMP:10163"/>
        <dbReference type="ChEBI" id="CHEBI:15378"/>
        <dbReference type="ChEBI" id="CHEBI:73682"/>
        <dbReference type="ChEBI" id="CHEBI:74411"/>
        <dbReference type="ChEBI" id="CHEBI:74418"/>
        <dbReference type="ChEBI" id="CHEBI:456215"/>
        <dbReference type="EC" id="2.3.1.234"/>
    </reaction>
</comment>
<comment type="cofactor">
    <cofactor evidence="1">
        <name>Fe(2+)</name>
        <dbReference type="ChEBI" id="CHEBI:29033"/>
    </cofactor>
    <text evidence="1">Binds 1 Fe(2+) ion per subunit.</text>
</comment>
<comment type="subcellular location">
    <subcellularLocation>
        <location evidence="1">Cytoplasm</location>
    </subcellularLocation>
</comment>
<comment type="similarity">
    <text evidence="1">Belongs to the KAE1 / TsaD family.</text>
</comment>
<gene>
    <name evidence="1" type="primary">tsaD</name>
    <name type="synonym">gcp</name>
    <name type="ordered locus">BH16110</name>
</gene>
<protein>
    <recommendedName>
        <fullName evidence="1">tRNA N6-adenosine threonylcarbamoyltransferase</fullName>
        <ecNumber evidence="1">2.3.1.234</ecNumber>
    </recommendedName>
    <alternativeName>
        <fullName evidence="1">N6-L-threonylcarbamoyladenine synthase</fullName>
        <shortName evidence="1">t(6)A synthase</shortName>
    </alternativeName>
    <alternativeName>
        <fullName evidence="1">t(6)A37 threonylcarbamoyladenosine biosynthesis protein TsaD</fullName>
    </alternativeName>
    <alternativeName>
        <fullName evidence="1">tRNA threonylcarbamoyladenosine biosynthesis protein TsaD</fullName>
    </alternativeName>
</protein>
<organism>
    <name type="scientific">Bartonella henselae (strain ATCC 49882 / DSM 28221 / CCUG 30454 / Houston 1)</name>
    <name type="common">Rochalimaea henselae</name>
    <dbReference type="NCBI Taxonomy" id="283166"/>
    <lineage>
        <taxon>Bacteria</taxon>
        <taxon>Pseudomonadati</taxon>
        <taxon>Pseudomonadota</taxon>
        <taxon>Alphaproteobacteria</taxon>
        <taxon>Hyphomicrobiales</taxon>
        <taxon>Bartonellaceae</taxon>
        <taxon>Bartonella</taxon>
    </lineage>
</organism>
<feature type="chain" id="PRO_0000303276" description="tRNA N6-adenosine threonylcarbamoyltransferase">
    <location>
        <begin position="1"/>
        <end position="364"/>
    </location>
</feature>
<feature type="region of interest" description="Disordered" evidence="2">
    <location>
        <begin position="341"/>
        <end position="364"/>
    </location>
</feature>
<feature type="binding site" evidence="1">
    <location>
        <position position="115"/>
    </location>
    <ligand>
        <name>Fe cation</name>
        <dbReference type="ChEBI" id="CHEBI:24875"/>
    </ligand>
</feature>
<feature type="binding site" evidence="1">
    <location>
        <position position="119"/>
    </location>
    <ligand>
        <name>Fe cation</name>
        <dbReference type="ChEBI" id="CHEBI:24875"/>
    </ligand>
</feature>
<feature type="binding site" evidence="1">
    <location>
        <begin position="137"/>
        <end position="141"/>
    </location>
    <ligand>
        <name>substrate</name>
    </ligand>
</feature>
<feature type="binding site" evidence="1">
    <location>
        <position position="170"/>
    </location>
    <ligand>
        <name>substrate</name>
    </ligand>
</feature>
<feature type="binding site" evidence="1">
    <location>
        <position position="183"/>
    </location>
    <ligand>
        <name>substrate</name>
    </ligand>
</feature>
<feature type="binding site" evidence="1">
    <location>
        <position position="288"/>
    </location>
    <ligand>
        <name>substrate</name>
    </ligand>
</feature>
<feature type="binding site" evidence="1">
    <location>
        <position position="316"/>
    </location>
    <ligand>
        <name>Fe cation</name>
        <dbReference type="ChEBI" id="CHEBI:24875"/>
    </ligand>
</feature>
<proteinExistence type="inferred from homology"/>
<sequence length="364" mass="38596">MRLLGIETSCDETATAVIEHTIGGNSQILSNIVWSQTDHHAPYGGVVPEIAARAHVEILDELILKALRDAHTKLKDIDAIAVTNGPGLIGGLLVGVMSAKALSLATGKPFIGVNHLEGHALTAVLTHNVHFPYLLLLVSGGHTQTILVHGVGNYQRLGTTIDDALGEAFDKTAKLLGLPYPGGPAIEKAALLGNKNRIPLPRPLKGEKRLDFSFSGLKTAVRQAATAISPLTESDVADIAASFQAAVTDTVYDRVYLALQHFTQQYPLSRHQGPRPPALVVAGGVAANQAIRLTLQELADQQGFEFIAPPLSLCTDNAAMIAFAGAQRLARGEKSSLDIAPRSRWPLDEKSAPLIGTGRRGTKA</sequence>
<accession>Q6G1R3</accession>
<dbReference type="EC" id="2.3.1.234" evidence="1"/>
<dbReference type="EMBL" id="BX897699">
    <property type="protein sequence ID" value="CAF28374.1"/>
    <property type="molecule type" value="Genomic_DNA"/>
</dbReference>
<dbReference type="RefSeq" id="WP_011181374.1">
    <property type="nucleotide sequence ID" value="NZ_LRIJ02000001.1"/>
</dbReference>
<dbReference type="SMR" id="Q6G1R3"/>
<dbReference type="PaxDb" id="283166-BH16110"/>
<dbReference type="EnsemblBacteria" id="CAF28374">
    <property type="protein sequence ID" value="CAF28374"/>
    <property type="gene ID" value="BH16110"/>
</dbReference>
<dbReference type="GeneID" id="92986230"/>
<dbReference type="KEGG" id="bhe:BH16110"/>
<dbReference type="eggNOG" id="COG0533">
    <property type="taxonomic scope" value="Bacteria"/>
</dbReference>
<dbReference type="OrthoDB" id="9806197at2"/>
<dbReference type="Proteomes" id="UP000000421">
    <property type="component" value="Chromosome"/>
</dbReference>
<dbReference type="GO" id="GO:0005737">
    <property type="term" value="C:cytoplasm"/>
    <property type="evidence" value="ECO:0007669"/>
    <property type="project" value="UniProtKB-SubCell"/>
</dbReference>
<dbReference type="GO" id="GO:0005506">
    <property type="term" value="F:iron ion binding"/>
    <property type="evidence" value="ECO:0007669"/>
    <property type="project" value="UniProtKB-UniRule"/>
</dbReference>
<dbReference type="GO" id="GO:0061711">
    <property type="term" value="F:N(6)-L-threonylcarbamoyladenine synthase activity"/>
    <property type="evidence" value="ECO:0007669"/>
    <property type="project" value="UniProtKB-EC"/>
</dbReference>
<dbReference type="GO" id="GO:0002949">
    <property type="term" value="P:tRNA threonylcarbamoyladenosine modification"/>
    <property type="evidence" value="ECO:0007669"/>
    <property type="project" value="UniProtKB-UniRule"/>
</dbReference>
<dbReference type="CDD" id="cd24133">
    <property type="entry name" value="ASKHA_NBD_TsaD_bac"/>
    <property type="match status" value="1"/>
</dbReference>
<dbReference type="FunFam" id="3.30.420.40:FF:000012">
    <property type="entry name" value="tRNA N6-adenosine threonylcarbamoyltransferase"/>
    <property type="match status" value="1"/>
</dbReference>
<dbReference type="Gene3D" id="3.30.420.40">
    <property type="match status" value="2"/>
</dbReference>
<dbReference type="HAMAP" id="MF_01445">
    <property type="entry name" value="TsaD"/>
    <property type="match status" value="1"/>
</dbReference>
<dbReference type="InterPro" id="IPR043129">
    <property type="entry name" value="ATPase_NBD"/>
</dbReference>
<dbReference type="InterPro" id="IPR000905">
    <property type="entry name" value="Gcp-like_dom"/>
</dbReference>
<dbReference type="InterPro" id="IPR017861">
    <property type="entry name" value="KAE1/TsaD"/>
</dbReference>
<dbReference type="InterPro" id="IPR022450">
    <property type="entry name" value="TsaD"/>
</dbReference>
<dbReference type="NCBIfam" id="TIGR00329">
    <property type="entry name" value="gcp_kae1"/>
    <property type="match status" value="1"/>
</dbReference>
<dbReference type="NCBIfam" id="TIGR03723">
    <property type="entry name" value="T6A_TsaD_YgjD"/>
    <property type="match status" value="1"/>
</dbReference>
<dbReference type="PANTHER" id="PTHR11735">
    <property type="entry name" value="TRNA N6-ADENOSINE THREONYLCARBAMOYLTRANSFERASE"/>
    <property type="match status" value="1"/>
</dbReference>
<dbReference type="PANTHER" id="PTHR11735:SF6">
    <property type="entry name" value="TRNA N6-ADENOSINE THREONYLCARBAMOYLTRANSFERASE, MITOCHONDRIAL"/>
    <property type="match status" value="1"/>
</dbReference>
<dbReference type="Pfam" id="PF00814">
    <property type="entry name" value="TsaD"/>
    <property type="match status" value="1"/>
</dbReference>
<dbReference type="PRINTS" id="PR00789">
    <property type="entry name" value="OSIALOPTASE"/>
</dbReference>
<dbReference type="SUPFAM" id="SSF53067">
    <property type="entry name" value="Actin-like ATPase domain"/>
    <property type="match status" value="2"/>
</dbReference>
<evidence type="ECO:0000255" key="1">
    <source>
        <dbReference type="HAMAP-Rule" id="MF_01445"/>
    </source>
</evidence>
<evidence type="ECO:0000256" key="2">
    <source>
        <dbReference type="SAM" id="MobiDB-lite"/>
    </source>
</evidence>